<organism>
    <name type="scientific">Salmonella arizonae (strain ATCC BAA-731 / CDC346-86 / RSK2980)</name>
    <dbReference type="NCBI Taxonomy" id="41514"/>
    <lineage>
        <taxon>Bacteria</taxon>
        <taxon>Pseudomonadati</taxon>
        <taxon>Pseudomonadota</taxon>
        <taxon>Gammaproteobacteria</taxon>
        <taxon>Enterobacterales</taxon>
        <taxon>Enterobacteriaceae</taxon>
        <taxon>Salmonella</taxon>
    </lineage>
</organism>
<reference key="1">
    <citation type="submission" date="2007-11" db="EMBL/GenBank/DDBJ databases">
        <authorList>
            <consortium name="The Salmonella enterica serovar Arizonae Genome Sequencing Project"/>
            <person name="McClelland M."/>
            <person name="Sanderson E.K."/>
            <person name="Porwollik S."/>
            <person name="Spieth J."/>
            <person name="Clifton W.S."/>
            <person name="Fulton R."/>
            <person name="Chunyan W."/>
            <person name="Wollam A."/>
            <person name="Shah N."/>
            <person name="Pepin K."/>
            <person name="Bhonagiri V."/>
            <person name="Nash W."/>
            <person name="Johnson M."/>
            <person name="Thiruvilangam P."/>
            <person name="Wilson R."/>
        </authorList>
    </citation>
    <scope>NUCLEOTIDE SEQUENCE [LARGE SCALE GENOMIC DNA]</scope>
    <source>
        <strain>ATCC BAA-731 / CDC346-86 / RSK2980</strain>
    </source>
</reference>
<feature type="chain" id="PRO_1000075074" description="Phosphoadenosine 5'-phosphosulfate reductase">
    <location>
        <begin position="1"/>
        <end position="244"/>
    </location>
</feature>
<feature type="active site" description="Nucleophile; cysteine thiosulfonate intermediate" evidence="1">
    <location>
        <position position="239"/>
    </location>
</feature>
<proteinExistence type="inferred from homology"/>
<evidence type="ECO:0000255" key="1">
    <source>
        <dbReference type="HAMAP-Rule" id="MF_00063"/>
    </source>
</evidence>
<name>CYSH_SALAR</name>
<dbReference type="EC" id="1.8.4.8" evidence="1"/>
<dbReference type="EMBL" id="CP000880">
    <property type="protein sequence ID" value="ABX19970.1"/>
    <property type="molecule type" value="Genomic_DNA"/>
</dbReference>
<dbReference type="SMR" id="A9MF18"/>
<dbReference type="STRING" id="41514.SARI_00016"/>
<dbReference type="KEGG" id="ses:SARI_00016"/>
<dbReference type="HOGENOM" id="CLU_044089_3_0_6"/>
<dbReference type="UniPathway" id="UPA00140">
    <property type="reaction ID" value="UER00206"/>
</dbReference>
<dbReference type="Proteomes" id="UP000002084">
    <property type="component" value="Chromosome"/>
</dbReference>
<dbReference type="GO" id="GO:0005737">
    <property type="term" value="C:cytoplasm"/>
    <property type="evidence" value="ECO:0007669"/>
    <property type="project" value="UniProtKB-SubCell"/>
</dbReference>
<dbReference type="GO" id="GO:0004604">
    <property type="term" value="F:phosphoadenylyl-sulfate reductase (thioredoxin) activity"/>
    <property type="evidence" value="ECO:0007669"/>
    <property type="project" value="UniProtKB-UniRule"/>
</dbReference>
<dbReference type="GO" id="GO:0070814">
    <property type="term" value="P:hydrogen sulfide biosynthetic process"/>
    <property type="evidence" value="ECO:0007669"/>
    <property type="project" value="UniProtKB-UniRule"/>
</dbReference>
<dbReference type="GO" id="GO:0019379">
    <property type="term" value="P:sulfate assimilation, phosphoadenylyl sulfate reduction by phosphoadenylyl-sulfate reductase (thioredoxin)"/>
    <property type="evidence" value="ECO:0007669"/>
    <property type="project" value="UniProtKB-UniRule"/>
</dbReference>
<dbReference type="CDD" id="cd23945">
    <property type="entry name" value="PAPS_reductase"/>
    <property type="match status" value="1"/>
</dbReference>
<dbReference type="FunFam" id="3.40.50.620:FF:000043">
    <property type="entry name" value="Phosphoadenosine phosphosulfate reductase"/>
    <property type="match status" value="1"/>
</dbReference>
<dbReference type="Gene3D" id="3.40.50.620">
    <property type="entry name" value="HUPs"/>
    <property type="match status" value="1"/>
</dbReference>
<dbReference type="HAMAP" id="MF_00063">
    <property type="entry name" value="CysH"/>
    <property type="match status" value="1"/>
</dbReference>
<dbReference type="InterPro" id="IPR004511">
    <property type="entry name" value="PAPS/APS_Rdtase"/>
</dbReference>
<dbReference type="InterPro" id="IPR002500">
    <property type="entry name" value="PAPS_reduct_dom"/>
</dbReference>
<dbReference type="InterPro" id="IPR011800">
    <property type="entry name" value="PAPS_reductase_CysH"/>
</dbReference>
<dbReference type="InterPro" id="IPR014729">
    <property type="entry name" value="Rossmann-like_a/b/a_fold"/>
</dbReference>
<dbReference type="NCBIfam" id="TIGR00434">
    <property type="entry name" value="cysH"/>
    <property type="match status" value="1"/>
</dbReference>
<dbReference type="NCBIfam" id="TIGR02057">
    <property type="entry name" value="PAPS_reductase"/>
    <property type="match status" value="1"/>
</dbReference>
<dbReference type="NCBIfam" id="NF002537">
    <property type="entry name" value="PRK02090.1"/>
    <property type="match status" value="1"/>
</dbReference>
<dbReference type="PANTHER" id="PTHR46509">
    <property type="entry name" value="PHOSPHOADENOSINE PHOSPHOSULFATE REDUCTASE"/>
    <property type="match status" value="1"/>
</dbReference>
<dbReference type="PANTHER" id="PTHR46509:SF1">
    <property type="entry name" value="PHOSPHOADENOSINE PHOSPHOSULFATE REDUCTASE"/>
    <property type="match status" value="1"/>
</dbReference>
<dbReference type="Pfam" id="PF01507">
    <property type="entry name" value="PAPS_reduct"/>
    <property type="match status" value="1"/>
</dbReference>
<dbReference type="PIRSF" id="PIRSF000857">
    <property type="entry name" value="PAPS_reductase"/>
    <property type="match status" value="1"/>
</dbReference>
<dbReference type="SUPFAM" id="SSF52402">
    <property type="entry name" value="Adenine nucleotide alpha hydrolases-like"/>
    <property type="match status" value="1"/>
</dbReference>
<sequence>MSVLDLNALNDLPKVDRVLALAETNAELEKLVAEERVAWSLENLPGEYVLSSSFGIQAAVSLHLVNQIRPDIPVILTDTGYLFPETYQFIDALTDKLKLNLKVYRATESAAWQEARYGKLWEQGVEGIEKYNEINKVEPMNRALQDLNAQTWFAGLRREQSGSRTSLPVLAIQRGVFKVLPIIDWDNRTVYQYLQKHGLKYHPLWHQGYLSVGDTHTTRKWEPGMAEEETRFFGLKRECGLHEG</sequence>
<comment type="function">
    <text evidence="1">Catalyzes the formation of sulfite from phosphoadenosine 5'-phosphosulfate (PAPS) using thioredoxin as an electron donor.</text>
</comment>
<comment type="catalytic activity">
    <reaction evidence="1">
        <text>[thioredoxin]-disulfide + sulfite + adenosine 3',5'-bisphosphate + 2 H(+) = [thioredoxin]-dithiol + 3'-phosphoadenylyl sulfate</text>
        <dbReference type="Rhea" id="RHEA:11724"/>
        <dbReference type="Rhea" id="RHEA-COMP:10698"/>
        <dbReference type="Rhea" id="RHEA-COMP:10700"/>
        <dbReference type="ChEBI" id="CHEBI:15378"/>
        <dbReference type="ChEBI" id="CHEBI:17359"/>
        <dbReference type="ChEBI" id="CHEBI:29950"/>
        <dbReference type="ChEBI" id="CHEBI:50058"/>
        <dbReference type="ChEBI" id="CHEBI:58339"/>
        <dbReference type="ChEBI" id="CHEBI:58343"/>
        <dbReference type="EC" id="1.8.4.8"/>
    </reaction>
</comment>
<comment type="pathway">
    <text evidence="1">Sulfur metabolism; hydrogen sulfide biosynthesis; sulfite from sulfate: step 3/3.</text>
</comment>
<comment type="subcellular location">
    <subcellularLocation>
        <location evidence="1">Cytoplasm</location>
    </subcellularLocation>
</comment>
<comment type="similarity">
    <text evidence="1">Belongs to the PAPS reductase family. CysH subfamily.</text>
</comment>
<gene>
    <name evidence="1" type="primary">cysH</name>
    <name type="ordered locus">SARI_00016</name>
</gene>
<protein>
    <recommendedName>
        <fullName evidence="1">Phosphoadenosine 5'-phosphosulfate reductase</fullName>
        <shortName evidence="1">PAPS reductase</shortName>
        <ecNumber evidence="1">1.8.4.8</ecNumber>
    </recommendedName>
    <alternativeName>
        <fullName evidence="1">3'-phosphoadenylylsulfate reductase</fullName>
    </alternativeName>
    <alternativeName>
        <fullName evidence="1">PAPS reductase, thioredoxin dependent</fullName>
    </alternativeName>
    <alternativeName>
        <fullName evidence="1">PAPS sulfotransferase</fullName>
    </alternativeName>
    <alternativeName>
        <fullName evidence="1">PAdoPS reductase</fullName>
    </alternativeName>
</protein>
<accession>A9MF18</accession>
<keyword id="KW-0963">Cytoplasm</keyword>
<keyword id="KW-0560">Oxidoreductase</keyword>
<keyword id="KW-1185">Reference proteome</keyword>